<protein>
    <recommendedName>
        <fullName>mRNA-capping enzyme subunit alpha</fullName>
    </recommendedName>
    <alternativeName>
        <fullName>GTP--RNA guanylyltransferase</fullName>
        <shortName>GTase</shortName>
    </alternativeName>
    <alternativeName>
        <fullName>mRNA guanylyltransferase</fullName>
        <ecNumber evidence="4">2.7.7.50</ecNumber>
    </alternativeName>
</protein>
<keyword id="KW-0002">3D-structure</keyword>
<keyword id="KW-0342">GTP-binding</keyword>
<keyword id="KW-0506">mRNA capping</keyword>
<keyword id="KW-0507">mRNA processing</keyword>
<keyword id="KW-0547">Nucleotide-binding</keyword>
<keyword id="KW-0548">Nucleotidyltransferase</keyword>
<keyword id="KW-0539">Nucleus</keyword>
<keyword id="KW-1185">Reference proteome</keyword>
<keyword id="KW-0808">Transferase</keyword>
<proteinExistence type="evidence at protein level"/>
<accession>Q01159</accession>
<accession>D6VU18</accession>
<accession>Q9URD1</accession>
<evidence type="ECO:0000256" key="1">
    <source>
        <dbReference type="SAM" id="MobiDB-lite"/>
    </source>
</evidence>
<evidence type="ECO:0000269" key="2">
    <source>
    </source>
</evidence>
<evidence type="ECO:0000269" key="3">
    <source>
    </source>
</evidence>
<evidence type="ECO:0000269" key="4">
    <source>
    </source>
</evidence>
<evidence type="ECO:0000269" key="5">
    <source>
    </source>
</evidence>
<evidence type="ECO:0000269" key="6">
    <source>
    </source>
</evidence>
<evidence type="ECO:0000269" key="7">
    <source>
    </source>
</evidence>
<evidence type="ECO:0000305" key="8"/>
<evidence type="ECO:0007829" key="9">
    <source>
        <dbReference type="PDB" id="3KYH"/>
    </source>
</evidence>
<name>MCE1_YEAST</name>
<organism>
    <name type="scientific">Saccharomyces cerevisiae (strain ATCC 204508 / S288c)</name>
    <name type="common">Baker's yeast</name>
    <dbReference type="NCBI Taxonomy" id="559292"/>
    <lineage>
        <taxon>Eukaryota</taxon>
        <taxon>Fungi</taxon>
        <taxon>Dikarya</taxon>
        <taxon>Ascomycota</taxon>
        <taxon>Saccharomycotina</taxon>
        <taxon>Saccharomycetes</taxon>
        <taxon>Saccharomycetales</taxon>
        <taxon>Saccharomycetaceae</taxon>
        <taxon>Saccharomyces</taxon>
    </lineage>
</organism>
<comment type="function">
    <text evidence="3 4">Second step of mRNA capping. Transfer of the GMP moiety of GTP to the 5'-diphosphate terminus of RNA via a covalent enzyme-GMP reaction intermediate.</text>
</comment>
<comment type="catalytic activity">
    <reaction evidence="4">
        <text>a 5'-end diphospho-ribonucleoside in mRNA + GTP + H(+) = a 5'-end (5'-triphosphoguanosine)-ribonucleoside in mRNA + diphosphate</text>
        <dbReference type="Rhea" id="RHEA:67012"/>
        <dbReference type="Rhea" id="RHEA-COMP:17165"/>
        <dbReference type="Rhea" id="RHEA-COMP:17166"/>
        <dbReference type="ChEBI" id="CHEBI:15378"/>
        <dbReference type="ChEBI" id="CHEBI:33019"/>
        <dbReference type="ChEBI" id="CHEBI:37565"/>
        <dbReference type="ChEBI" id="CHEBI:167616"/>
        <dbReference type="ChEBI" id="CHEBI:167617"/>
        <dbReference type="EC" id="2.7.7.50"/>
    </reaction>
    <physiologicalReaction direction="left-to-right" evidence="4">
        <dbReference type="Rhea" id="RHEA:67013"/>
    </physiologicalReaction>
</comment>
<comment type="biophysicochemical properties">
    <kinetics>
        <KM evidence="4">5 uM for GTP</KM>
        <KM evidence="4">4 uM for ppG-terminated RNA</KM>
    </kinetics>
    <phDependence>
        <text evidence="4">Optimum pH is 7.0.</text>
    </phDependence>
</comment>
<comment type="subunit">
    <text evidence="3 5">Heterodimer (PubMed:3029058, PubMed:6389537). The mRNA-capping enzyme is composed of two separate chains alpha and beta, respectively a mRNA guanylyltransferase and an mRNA 5'-triphosphate monophosphatase (PubMed:3029058, PubMed:6389537).</text>
</comment>
<comment type="interaction">
    <interactant intactId="EBI-10503">
        <id>Q01159</id>
    </interactant>
    <interactant intactId="EBI-4473">
        <id>O13297</id>
        <label>CET1</label>
    </interactant>
    <organismsDiffer>false</organismsDiffer>
    <experiments>10</experiments>
</comment>
<comment type="subcellular location">
    <subcellularLocation>
        <location>Nucleus</location>
    </subcellularLocation>
</comment>
<comment type="miscellaneous">
    <text evidence="2">Present with 279 molecules/cell in log phase SD medium.</text>
</comment>
<comment type="similarity">
    <text evidence="8">Belongs to the eukaryotic GTase family.</text>
</comment>
<sequence>MVLAMESRVAPEIPGLIQPGNVTQDLKMMVCKLLNSPKPTKTFPGSQPVSFQHSDVEEKLLAHDYYVCEKTDGLRVLMFIVINPVTGEQGCFMIDRENNYYLVNGFRFPRLPQKKKEELLETLQDGTLLDGELVIQTNPMTKLQELRYLMFDCLAINGRCLTQSPTSSRLAHLGKEFFKPYFDLRAAYPNRCTTFPFKISMKHMDFSYQLVKVAKSLDKLPHLSDGLIFTPVKAPYTAGGKDSLLLKWKPEQENTVDFKLILDIPMVEDPSLPKDDRNRWYYNYDVKPVFSLYVWQGGADVNSRLKHFDQPFDRKEFEILERTYRKFAELSVSDEEWQNLKNLEQPLNGRIVECAKNQETGAWEMLRFRDDKLNGNHTSVVQKVLESINDSVSLEDLEEIVGDIKRCWDERRANMAGGSGRPLPSQSQNATLSTSKPVHSQPPSNDKEPKYVDEDDWSD</sequence>
<feature type="chain" id="PRO_0000210106" description="mRNA-capping enzyme subunit alpha">
    <location>
        <begin position="1"/>
        <end position="459"/>
    </location>
</feature>
<feature type="region of interest" description="Disordered" evidence="1">
    <location>
        <begin position="415"/>
        <end position="459"/>
    </location>
</feature>
<feature type="compositionally biased region" description="Polar residues" evidence="1">
    <location>
        <begin position="424"/>
        <end position="444"/>
    </location>
</feature>
<feature type="active site" description="N6-GMP-lysine intermediate" evidence="7">
    <location>
        <position position="70"/>
    </location>
</feature>
<feature type="mutagenesis site" description="No effect." evidence="6">
    <original>E</original>
    <variation>A</variation>
    <location>
        <position position="57"/>
    </location>
</feature>
<feature type="mutagenesis site" description="No effect." evidence="6">
    <original>E</original>
    <variation>A</variation>
    <location>
        <position position="58"/>
    </location>
</feature>
<feature type="mutagenesis site" description="No effect." evidence="7">
    <original>K</original>
    <variation>A</variation>
    <variation>T</variation>
    <variation>S</variation>
    <variation>R</variation>
    <location>
        <position position="59"/>
    </location>
</feature>
<feature type="mutagenesis site" description="Temperature-sensitive." evidence="6">
    <original>Y</original>
    <variation>A</variation>
    <location>
        <position position="66"/>
    </location>
</feature>
<feature type="mutagenesis site" description="Lethal." evidence="7">
    <original>K</original>
    <variation>A</variation>
    <variation>R</variation>
    <variation>M</variation>
    <variation>I</variation>
    <variation>T</variation>
    <location>
        <position position="70"/>
    </location>
</feature>
<feature type="mutagenesis site" description="No effect." evidence="6">
    <original>T</original>
    <variation>A</variation>
    <location>
        <position position="71"/>
    </location>
</feature>
<feature type="mutagenesis site" description="No effect." evidence="6">
    <original>D</original>
    <variation>A</variation>
    <location>
        <position position="72"/>
    </location>
</feature>
<feature type="mutagenesis site" description="Lethal." evidence="6">
    <original>G</original>
    <variation>A</variation>
    <location>
        <position position="73"/>
    </location>
</feature>
<feature type="mutagenesis site" description="Temperature-sensitive." evidence="6">
    <original>D</original>
    <variation>A</variation>
    <location>
        <position position="95"/>
    </location>
</feature>
<feature type="mutagenesis site" description="Temperature-sensitive." evidence="6">
    <original>R</original>
    <variation>A</variation>
    <location>
        <position position="96"/>
    </location>
</feature>
<feature type="mutagenesis site" description="Temperature-sensitive." evidence="6">
    <original>E</original>
    <variation>A</variation>
    <location>
        <position position="97"/>
    </location>
</feature>
<feature type="mutagenesis site" description="Reduced growth at 25 degrees and lethal at 37 degrees." evidence="6">
    <original>RFP</original>
    <variation>AAA</variation>
    <location>
        <begin position="107"/>
        <end position="109"/>
    </location>
</feature>
<feature type="mutagenesis site" description="No effect." evidence="6">
    <original>K</original>
    <variation>A</variation>
    <location>
        <position position="114"/>
    </location>
</feature>
<feature type="mutagenesis site" description="No effect." evidence="6">
    <original>K</original>
    <variation>A</variation>
    <location>
        <position position="115"/>
    </location>
</feature>
<feature type="mutagenesis site" description="No effect." evidence="6">
    <original>K</original>
    <variation>A</variation>
    <location>
        <position position="116"/>
    </location>
</feature>
<feature type="mutagenesis site" description="No effect." evidence="6">
    <original>E</original>
    <variation>A</variation>
    <location>
        <position position="117"/>
    </location>
</feature>
<feature type="mutagenesis site" description="No effect." evidence="6">
    <original>E</original>
    <variation>A</variation>
    <location>
        <position position="118"/>
    </location>
</feature>
<feature type="mutagenesis site" description="No effect." evidence="6">
    <original>L</original>
    <variation>A</variation>
    <location>
        <position position="129"/>
    </location>
</feature>
<feature type="mutagenesis site" description="Lethal." evidence="6">
    <original>D</original>
    <variation>A</variation>
    <location>
        <position position="130"/>
    </location>
</feature>
<feature type="mutagenesis site" description="Temperature-sensitive." evidence="6">
    <original>G</original>
    <variation>A</variation>
    <location>
        <position position="131"/>
    </location>
</feature>
<feature type="mutagenesis site" description="Lethal." evidence="6">
    <original>E</original>
    <variation>A</variation>
    <location>
        <position position="132"/>
    </location>
</feature>
<feature type="mutagenesis site" description="No effect." evidence="6">
    <original>V</original>
    <variation>A</variation>
    <location>
        <position position="134"/>
    </location>
</feature>
<feature type="mutagenesis site" description="No effect." evidence="6">
    <original>D</original>
    <variation>A</variation>
    <location>
        <position position="218"/>
    </location>
</feature>
<feature type="mutagenesis site" description="No effect." evidence="6">
    <original>K</original>
    <variation>A</variation>
    <location>
        <position position="219"/>
    </location>
</feature>
<feature type="mutagenesis site" description="Lethal." evidence="6">
    <original>D</original>
    <variation>A</variation>
    <location>
        <position position="225"/>
    </location>
</feature>
<feature type="mutagenesis site" description="Lethal." evidence="6">
    <original>G</original>
    <variation>A</variation>
    <location>
        <position position="226"/>
    </location>
</feature>
<feature type="mutagenesis site" description="No effect." evidence="6">
    <original>K</original>
    <variation>A</variation>
    <location>
        <position position="241"/>
    </location>
</feature>
<feature type="mutagenesis site" description="No effect." evidence="6">
    <original>D</original>
    <variation>A</variation>
    <location>
        <position position="242"/>
    </location>
</feature>
<feature type="mutagenesis site" description="Lethal." evidence="6">
    <original>K</original>
    <variation>A</variation>
    <location>
        <position position="249"/>
    </location>
</feature>
<feature type="mutagenesis site" description="No effect." evidence="6">
    <original>E</original>
    <variation>A</variation>
    <location>
        <position position="253"/>
    </location>
</feature>
<feature type="mutagenesis site" description="No effect." evidence="6">
    <original>N</original>
    <variation>A</variation>
    <location>
        <position position="254"/>
    </location>
</feature>
<feature type="mutagenesis site" description="Temperature-sensitive." evidence="6">
    <original>T</original>
    <variation>A</variation>
    <location>
        <position position="255"/>
    </location>
</feature>
<feature type="mutagenesis site" description="Lethal." evidence="6">
    <original>D</original>
    <variation>A</variation>
    <location>
        <position position="257"/>
    </location>
</feature>
<feature type="mutagenesis site" description="No effect." evidence="6">
    <original>K</original>
    <variation>A</variation>
    <location>
        <position position="274"/>
    </location>
</feature>
<feature type="mutagenesis site" description="No effect." evidence="6">
    <original>D</original>
    <variation>A</variation>
    <location>
        <position position="275"/>
    </location>
</feature>
<feature type="mutagenesis site" description="No effect." evidence="6">
    <original>D</original>
    <variation>A</variation>
    <location>
        <position position="276"/>
    </location>
</feature>
<feature type="mutagenesis site" description="No effect." evidence="6">
    <original>E</original>
    <variation>A</variation>
    <location>
        <position position="395"/>
    </location>
</feature>
<feature type="mutagenesis site" description="No effect." evidence="6">
    <original>D</original>
    <variation>A</variation>
    <location>
        <position position="396"/>
    </location>
</feature>
<feature type="sequence conflict" description="In Ref. 3." evidence="8" ref="3">
    <original>G</original>
    <variation>S</variation>
    <location>
        <position position="45"/>
    </location>
</feature>
<feature type="sequence conflict" description="In Ref. 3." evidence="8" ref="3">
    <original>D</original>
    <variation>N</variation>
    <location>
        <position position="300"/>
    </location>
</feature>
<feature type="helix" evidence="9">
    <location>
        <begin position="21"/>
        <end position="33"/>
    </location>
</feature>
<feature type="helix" evidence="9">
    <location>
        <begin position="38"/>
        <end position="40"/>
    </location>
</feature>
<feature type="strand" evidence="9">
    <location>
        <begin position="47"/>
        <end position="50"/>
    </location>
</feature>
<feature type="helix" evidence="9">
    <location>
        <begin position="53"/>
        <end position="58"/>
    </location>
</feature>
<feature type="strand" evidence="9">
    <location>
        <begin position="61"/>
        <end position="63"/>
    </location>
</feature>
<feature type="strand" evidence="9">
    <location>
        <begin position="65"/>
        <end position="71"/>
    </location>
</feature>
<feature type="strand" evidence="9">
    <location>
        <begin position="73"/>
        <end position="82"/>
    </location>
</feature>
<feature type="turn" evidence="9">
    <location>
        <begin position="84"/>
        <end position="86"/>
    </location>
</feature>
<feature type="strand" evidence="9">
    <location>
        <begin position="89"/>
        <end position="94"/>
    </location>
</feature>
<feature type="strand" evidence="9">
    <location>
        <begin position="96"/>
        <end position="98"/>
    </location>
</feature>
<feature type="strand" evidence="9">
    <location>
        <begin position="100"/>
        <end position="103"/>
    </location>
</feature>
<feature type="helix" evidence="9">
    <location>
        <begin position="118"/>
        <end position="120"/>
    </location>
</feature>
<feature type="strand" evidence="9">
    <location>
        <begin position="126"/>
        <end position="137"/>
    </location>
</feature>
<feature type="turn" evidence="9">
    <location>
        <begin position="139"/>
        <end position="141"/>
    </location>
</feature>
<feature type="strand" evidence="9">
    <location>
        <begin position="144"/>
        <end position="156"/>
    </location>
</feature>
<feature type="strand" evidence="9">
    <location>
        <begin position="162"/>
        <end position="165"/>
    </location>
</feature>
<feature type="helix" evidence="9">
    <location>
        <begin position="166"/>
        <end position="175"/>
    </location>
</feature>
<feature type="helix" evidence="9">
    <location>
        <begin position="178"/>
        <end position="187"/>
    </location>
</feature>
<feature type="strand" evidence="9">
    <location>
        <begin position="197"/>
        <end position="201"/>
    </location>
</feature>
<feature type="helix" evidence="9">
    <location>
        <begin position="207"/>
        <end position="209"/>
    </location>
</feature>
<feature type="helix" evidence="9">
    <location>
        <begin position="210"/>
        <end position="217"/>
    </location>
</feature>
<feature type="strand" evidence="9">
    <location>
        <begin position="224"/>
        <end position="235"/>
    </location>
</feature>
<feature type="strand" evidence="9">
    <location>
        <begin position="238"/>
        <end position="247"/>
    </location>
</feature>
<feature type="turn" evidence="9">
    <location>
        <begin position="251"/>
        <end position="253"/>
    </location>
</feature>
<feature type="strand" evidence="9">
    <location>
        <begin position="257"/>
        <end position="261"/>
    </location>
</feature>
<feature type="strand" evidence="9">
    <location>
        <begin position="291"/>
        <end position="295"/>
    </location>
</feature>
<feature type="helix" evidence="9">
    <location>
        <begin position="300"/>
        <end position="307"/>
    </location>
</feature>
<feature type="turn" evidence="9">
    <location>
        <begin position="313"/>
        <end position="316"/>
    </location>
</feature>
<feature type="helix" evidence="9">
    <location>
        <begin position="317"/>
        <end position="320"/>
    </location>
</feature>
<feature type="turn" evidence="9">
    <location>
        <begin position="321"/>
        <end position="323"/>
    </location>
</feature>
<feature type="strand" evidence="9">
    <location>
        <begin position="324"/>
        <end position="329"/>
    </location>
</feature>
<feature type="turn" evidence="9">
    <location>
        <begin position="334"/>
        <end position="336"/>
    </location>
</feature>
<feature type="helix" evidence="9">
    <location>
        <begin position="337"/>
        <end position="342"/>
    </location>
</feature>
<feature type="strand" evidence="9">
    <location>
        <begin position="350"/>
        <end position="354"/>
    </location>
</feature>
<feature type="turn" evidence="9">
    <location>
        <begin position="358"/>
        <end position="360"/>
    </location>
</feature>
<feature type="strand" evidence="9">
    <location>
        <begin position="365"/>
        <end position="368"/>
    </location>
</feature>
<feature type="strand" evidence="9">
    <location>
        <begin position="372"/>
        <end position="374"/>
    </location>
</feature>
<feature type="helix" evidence="9">
    <location>
        <begin position="378"/>
        <end position="390"/>
    </location>
</feature>
<feature type="helix" evidence="9">
    <location>
        <begin position="395"/>
        <end position="398"/>
    </location>
</feature>
<feature type="helix" evidence="9">
    <location>
        <begin position="399"/>
        <end position="401"/>
    </location>
</feature>
<feature type="helix" evidence="9">
    <location>
        <begin position="402"/>
        <end position="414"/>
    </location>
</feature>
<reference key="1">
    <citation type="journal article" date="1992" name="J. Biol. Chem.">
        <title>mRNA capping enzyme. Isolation and characterization of the gene encoding mRNA guanylytransferase subunit from Saccharomyces cerevisiae.</title>
        <authorList>
            <person name="Shibagaki Y."/>
            <person name="Itoh N."/>
            <person name="Yamada H."/>
            <person name="Nagata S."/>
            <person name="Mizumoto K."/>
        </authorList>
    </citation>
    <scope>NUCLEOTIDE SEQUENCE [GENOMIC DNA]</scope>
    <source>
        <strain>DBY939</strain>
    </source>
</reference>
<reference key="2">
    <citation type="submission" date="1994-01" db="EMBL/GenBank/DDBJ databases">
        <authorList>
            <person name="Mizumoto K."/>
        </authorList>
    </citation>
    <scope>SEQUENCE REVISION TO 29-30</scope>
</reference>
<reference key="3">
    <citation type="journal article" date="1995" name="Mol. Gen. Genet.">
        <title>Isolation of temperature-sensitive mutants for mRNA capping enzyme in Saccharomyces cerevisiae.</title>
        <authorList>
            <person name="Yamagishi M."/>
            <person name="Mizumoto K."/>
            <person name="Ishihama A."/>
        </authorList>
    </citation>
    <scope>NUCLEOTIDE SEQUENCE [GENOMIC DNA]</scope>
</reference>
<reference key="4">
    <citation type="journal article" date="1996" name="Yeast">
        <title>Sequence analysis of a 10 kb DNA fragment from yeast chromosome VII reveals a novel member of the DnaJ family.</title>
        <authorList>
            <person name="Rodriguez-Belmonte E."/>
            <person name="Rodriguez Torres A.M."/>
            <person name="Tizon B."/>
            <person name="Cadahia J.L."/>
            <person name="Gonzalez-Siso I."/>
            <person name="Ramil E."/>
            <person name="Becerra M."/>
            <person name="Gonzalez-Dominguez M."/>
            <person name="Cerdan E."/>
        </authorList>
    </citation>
    <scope>NUCLEOTIDE SEQUENCE [GENOMIC DNA]</scope>
</reference>
<reference key="5">
    <citation type="journal article" date="1997" name="Nature">
        <title>The nucleotide sequence of Saccharomyces cerevisiae chromosome VII.</title>
        <authorList>
            <person name="Tettelin H."/>
            <person name="Agostoni-Carbone M.L."/>
            <person name="Albermann K."/>
            <person name="Albers M."/>
            <person name="Arroyo J."/>
            <person name="Backes U."/>
            <person name="Barreiros T."/>
            <person name="Bertani I."/>
            <person name="Bjourson A.J."/>
            <person name="Brueckner M."/>
            <person name="Bruschi C.V."/>
            <person name="Carignani G."/>
            <person name="Castagnoli L."/>
            <person name="Cerdan E."/>
            <person name="Clemente M.L."/>
            <person name="Coblenz A."/>
            <person name="Coglievina M."/>
            <person name="Coissac E."/>
            <person name="Defoor E."/>
            <person name="Del Bino S."/>
            <person name="Delius H."/>
            <person name="Delneri D."/>
            <person name="de Wergifosse P."/>
            <person name="Dujon B."/>
            <person name="Durand P."/>
            <person name="Entian K.-D."/>
            <person name="Eraso P."/>
            <person name="Escribano V."/>
            <person name="Fabiani L."/>
            <person name="Fartmann B."/>
            <person name="Feroli F."/>
            <person name="Feuermann M."/>
            <person name="Frontali L."/>
            <person name="Garcia-Gonzalez M."/>
            <person name="Garcia-Saez M.I."/>
            <person name="Goffeau A."/>
            <person name="Guerreiro P."/>
            <person name="Hani J."/>
            <person name="Hansen M."/>
            <person name="Hebling U."/>
            <person name="Hernandez K."/>
            <person name="Heumann K."/>
            <person name="Hilger F."/>
            <person name="Hofmann B."/>
            <person name="Indge K.J."/>
            <person name="James C.M."/>
            <person name="Klima R."/>
            <person name="Koetter P."/>
            <person name="Kramer B."/>
            <person name="Kramer W."/>
            <person name="Lauquin G."/>
            <person name="Leuther H."/>
            <person name="Louis E.J."/>
            <person name="Maillier E."/>
            <person name="Marconi A."/>
            <person name="Martegani E."/>
            <person name="Mazon M.J."/>
            <person name="Mazzoni C."/>
            <person name="McReynolds A.D.K."/>
            <person name="Melchioretto P."/>
            <person name="Mewes H.-W."/>
            <person name="Minenkova O."/>
            <person name="Mueller-Auer S."/>
            <person name="Nawrocki A."/>
            <person name="Netter P."/>
            <person name="Neu R."/>
            <person name="Nombela C."/>
            <person name="Oliver S.G."/>
            <person name="Panzeri L."/>
            <person name="Paoluzi S."/>
            <person name="Plevani P."/>
            <person name="Portetelle D."/>
            <person name="Portillo F."/>
            <person name="Potier S."/>
            <person name="Purnelle B."/>
            <person name="Rieger M."/>
            <person name="Riles L."/>
            <person name="Rinaldi T."/>
            <person name="Robben J."/>
            <person name="Rodrigues-Pousada C."/>
            <person name="Rodriguez-Belmonte E."/>
            <person name="Rodriguez-Torres A.M."/>
            <person name="Rose M."/>
            <person name="Ruzzi M."/>
            <person name="Saliola M."/>
            <person name="Sanchez-Perez M."/>
            <person name="Schaefer B."/>
            <person name="Schaefer M."/>
            <person name="Scharfe M."/>
            <person name="Schmidheini T."/>
            <person name="Schreer A."/>
            <person name="Skala J."/>
            <person name="Souciet J.-L."/>
            <person name="Steensma H.Y."/>
            <person name="Talla E."/>
            <person name="Thierry A."/>
            <person name="Vandenbol M."/>
            <person name="van der Aart Q.J.M."/>
            <person name="Van Dyck L."/>
            <person name="Vanoni M."/>
            <person name="Verhasselt P."/>
            <person name="Voet M."/>
            <person name="Volckaert G."/>
            <person name="Wambutt R."/>
            <person name="Watson M.D."/>
            <person name="Weber N."/>
            <person name="Wedler E."/>
            <person name="Wedler H."/>
            <person name="Wipfli P."/>
            <person name="Wolf K."/>
            <person name="Wright L.F."/>
            <person name="Zaccaria P."/>
            <person name="Zimmermann M."/>
            <person name="Zollner A."/>
            <person name="Kleine K."/>
        </authorList>
    </citation>
    <scope>NUCLEOTIDE SEQUENCE [LARGE SCALE GENOMIC DNA]</scope>
    <source>
        <strain>ATCC 204508 / S288c</strain>
    </source>
</reference>
<reference key="6">
    <citation type="journal article" date="2014" name="G3 (Bethesda)">
        <title>The reference genome sequence of Saccharomyces cerevisiae: Then and now.</title>
        <authorList>
            <person name="Engel S.R."/>
            <person name="Dietrich F.S."/>
            <person name="Fisk D.G."/>
            <person name="Binkley G."/>
            <person name="Balakrishnan R."/>
            <person name="Costanzo M.C."/>
            <person name="Dwight S.S."/>
            <person name="Hitz B.C."/>
            <person name="Karra K."/>
            <person name="Nash R.S."/>
            <person name="Weng S."/>
            <person name="Wong E.D."/>
            <person name="Lloyd P."/>
            <person name="Skrzypek M.S."/>
            <person name="Miyasato S.R."/>
            <person name="Simison M."/>
            <person name="Cherry J.M."/>
        </authorList>
    </citation>
    <scope>GENOME REANNOTATION</scope>
    <source>
        <strain>ATCC 204508 / S288c</strain>
    </source>
</reference>
<reference key="7">
    <citation type="journal article" date="1994" name="Proc. Natl. Acad. Sci. U.S.A.">
        <title>Covalent catalysis in nucleotidyl transfer reactions: essential motifs in Saccharomyces cerevisiae RNA capping enzyme are conserved in Schizosaccharomyces pombe and viral capping enzymes and among polynucleotide ligases.</title>
        <authorList>
            <person name="Shuman S."/>
            <person name="Liu Y."/>
            <person name="Schwer B."/>
        </authorList>
    </citation>
    <scope>MUTAGENESIS</scope>
</reference>
<reference key="8">
    <citation type="journal article" date="1994" name="Proc. Natl. Acad. Sci. U.S.A.">
        <title>Active site of the mRNA-capping enzyme guanylyltransferase from Saccharomyces cerevisiae: similarity to the nucleotidyl attachment motif of DNA and RNA ligases.</title>
        <authorList>
            <person name="Fresco L.D."/>
            <person name="Buratowski S."/>
        </authorList>
    </citation>
    <scope>ACTIVE SITE</scope>
    <scope>MUTAGENESIS OF LYS-59 AND LYS-70</scope>
</reference>
<reference key="9">
    <citation type="journal article" date="1984" name="J. Biol. Chem.">
        <title>Messenger RNA guanylyltransferase from Saccharomyces cerevisiae. I. Purification and subunit structure.</title>
        <authorList>
            <person name="Itoh N."/>
            <person name="Mizumoto K."/>
            <person name="Kaziro Y."/>
        </authorList>
    </citation>
    <scope>SUBUNIT</scope>
</reference>
<reference key="10">
    <citation type="journal article" date="1984" name="J. Biol. Chem.">
        <title>Messenger RNA guanylyltransferase from Saccharomyces cerevisiae. II. Catalytic properties.</title>
        <authorList>
            <person name="Itoh N."/>
            <person name="Mizumoto K."/>
            <person name="Kaziro Y."/>
        </authorList>
    </citation>
    <scope>FUNCTION</scope>
    <scope>CATALYTIC ACTIVITY</scope>
    <scope>BIOPHYSICOCHEMICAL PROPERTIES</scope>
    <scope>REACTION MECHANISM</scope>
</reference>
<reference key="11">
    <citation type="journal article" date="1987" name="J. Biol. Chem.">
        <title>Messenger RNA guanylyltransferase from Saccharomyces cerevisiae. Large scale purification, subunit functions, and subcellular localization.</title>
        <authorList>
            <person name="Itoh N."/>
            <person name="Yamada H."/>
            <person name="Kaziro Y."/>
            <person name="Mizumoto K."/>
        </authorList>
    </citation>
    <scope>FUNCTION</scope>
    <scope>SUBUNIT</scope>
</reference>
<reference key="12">
    <citation type="journal article" date="2003" name="Nature">
        <title>Global analysis of protein expression in yeast.</title>
        <authorList>
            <person name="Ghaemmaghami S."/>
            <person name="Huh W.-K."/>
            <person name="Bower K."/>
            <person name="Howson R.W."/>
            <person name="Belle A."/>
            <person name="Dephoure N."/>
            <person name="O'Shea E.K."/>
            <person name="Weissman J.S."/>
        </authorList>
    </citation>
    <scope>LEVEL OF PROTEIN EXPRESSION [LARGE SCALE ANALYSIS]</scope>
</reference>
<reference key="13">
    <citation type="journal article" date="2012" name="Proc. Natl. Acad. Sci. U.S.A.">
        <title>N-terminal acetylome analyses and functional insights of the N-terminal acetyltransferase NatB.</title>
        <authorList>
            <person name="Van Damme P."/>
            <person name="Lasa M."/>
            <person name="Polevoda B."/>
            <person name="Gazquez C."/>
            <person name="Elosegui-Artola A."/>
            <person name="Kim D.S."/>
            <person name="De Juan-Pardo E."/>
            <person name="Demeyer K."/>
            <person name="Hole K."/>
            <person name="Larrea E."/>
            <person name="Timmerman E."/>
            <person name="Prieto J."/>
            <person name="Arnesen T."/>
            <person name="Sherman F."/>
            <person name="Gevaert K."/>
            <person name="Aldabe R."/>
        </authorList>
    </citation>
    <scope>IDENTIFICATION BY MASS SPECTROMETRY [LARGE SCALE ANALYSIS]</scope>
</reference>
<dbReference type="EC" id="2.7.7.50" evidence="4"/>
<dbReference type="EMBL" id="D10263">
    <property type="protein sequence ID" value="BAA01103.1"/>
    <property type="molecule type" value="Genomic_DNA"/>
</dbReference>
<dbReference type="EMBL" id="X87252">
    <property type="protein sequence ID" value="CAA60705.1"/>
    <property type="molecule type" value="Genomic_DNA"/>
</dbReference>
<dbReference type="EMBL" id="Z72652">
    <property type="protein sequence ID" value="CAA96839.1"/>
    <property type="molecule type" value="Genomic_DNA"/>
</dbReference>
<dbReference type="EMBL" id="BK006941">
    <property type="protein sequence ID" value="DAA07979.1"/>
    <property type="molecule type" value="Genomic_DNA"/>
</dbReference>
<dbReference type="PIR" id="S59731">
    <property type="entry name" value="S59731"/>
</dbReference>
<dbReference type="RefSeq" id="NP_011385.3">
    <property type="nucleotide sequence ID" value="NM_001180995.3"/>
</dbReference>
<dbReference type="PDB" id="3KYH">
    <property type="method" value="X-ray"/>
    <property type="resolution" value="3.00 A"/>
    <property type="chains" value="C/D=1-459"/>
</dbReference>
<dbReference type="PDBsum" id="3KYH"/>
<dbReference type="SMR" id="Q01159"/>
<dbReference type="BioGRID" id="33121">
    <property type="interactions" value="618"/>
</dbReference>
<dbReference type="ComplexPortal" id="CPX-580">
    <property type="entry name" value="mRNA capping enzyme complex"/>
</dbReference>
<dbReference type="DIP" id="DIP-2298N"/>
<dbReference type="FunCoup" id="Q01159">
    <property type="interactions" value="490"/>
</dbReference>
<dbReference type="IntAct" id="Q01159">
    <property type="interactions" value="55"/>
</dbReference>
<dbReference type="MINT" id="Q01159"/>
<dbReference type="STRING" id="4932.YGL130W"/>
<dbReference type="iPTMnet" id="Q01159"/>
<dbReference type="PaxDb" id="4932-YGL130W"/>
<dbReference type="PeptideAtlas" id="Q01159"/>
<dbReference type="EnsemblFungi" id="YGL130W_mRNA">
    <property type="protein sequence ID" value="YGL130W"/>
    <property type="gene ID" value="YGL130W"/>
</dbReference>
<dbReference type="GeneID" id="852747"/>
<dbReference type="KEGG" id="sce:YGL130W"/>
<dbReference type="AGR" id="SGD:S000003098"/>
<dbReference type="SGD" id="S000003098">
    <property type="gene designation" value="CEG1"/>
</dbReference>
<dbReference type="VEuPathDB" id="FungiDB:YGL130W"/>
<dbReference type="eggNOG" id="KOG2386">
    <property type="taxonomic scope" value="Eukaryota"/>
</dbReference>
<dbReference type="GeneTree" id="ENSGT00940000156953"/>
<dbReference type="HOGENOM" id="CLU_021710_0_2_1"/>
<dbReference type="InParanoid" id="Q01159"/>
<dbReference type="OMA" id="KDYYVCE"/>
<dbReference type="OrthoDB" id="200924at2759"/>
<dbReference type="BioCyc" id="MetaCyc:G3O-30626-MONOMER"/>
<dbReference type="BioCyc" id="YEAST:G3O-30626-MONOMER"/>
<dbReference type="BRENDA" id="2.7.7.50">
    <property type="organism ID" value="984"/>
</dbReference>
<dbReference type="Reactome" id="R-SCE-72086">
    <property type="pathway name" value="mRNA Capping"/>
</dbReference>
<dbReference type="Reactome" id="R-SCE-77075">
    <property type="pathway name" value="RNA Pol II CTD phosphorylation and interaction with CE"/>
</dbReference>
<dbReference type="SABIO-RK" id="Q01159"/>
<dbReference type="BioGRID-ORCS" id="852747">
    <property type="hits" value="0 hits in 10 CRISPR screens"/>
</dbReference>
<dbReference type="EvolutionaryTrace" id="Q01159"/>
<dbReference type="PRO" id="PR:Q01159"/>
<dbReference type="Proteomes" id="UP000002311">
    <property type="component" value="Chromosome VII"/>
</dbReference>
<dbReference type="RNAct" id="Q01159">
    <property type="molecule type" value="protein"/>
</dbReference>
<dbReference type="GO" id="GO:0031533">
    <property type="term" value="C:mRNA capping enzyme complex"/>
    <property type="evidence" value="ECO:0000316"/>
    <property type="project" value="SGD"/>
</dbReference>
<dbReference type="GO" id="GO:0005634">
    <property type="term" value="C:nucleus"/>
    <property type="evidence" value="ECO:0000353"/>
    <property type="project" value="SGD"/>
</dbReference>
<dbReference type="GO" id="GO:0005524">
    <property type="term" value="F:ATP binding"/>
    <property type="evidence" value="ECO:0007669"/>
    <property type="project" value="InterPro"/>
</dbReference>
<dbReference type="GO" id="GO:0005525">
    <property type="term" value="F:GTP binding"/>
    <property type="evidence" value="ECO:0007669"/>
    <property type="project" value="UniProtKB-KW"/>
</dbReference>
<dbReference type="GO" id="GO:0004484">
    <property type="term" value="F:mRNA guanylyltransferase activity"/>
    <property type="evidence" value="ECO:0000315"/>
    <property type="project" value="SGD"/>
</dbReference>
<dbReference type="GO" id="GO:0006370">
    <property type="term" value="P:7-methylguanosine mRNA capping"/>
    <property type="evidence" value="ECO:0000314"/>
    <property type="project" value="ComplexPortal"/>
</dbReference>
<dbReference type="GO" id="GO:0045944">
    <property type="term" value="P:positive regulation of transcription by RNA polymerase II"/>
    <property type="evidence" value="ECO:0000315"/>
    <property type="project" value="SGD"/>
</dbReference>
<dbReference type="GO" id="GO:0008033">
    <property type="term" value="P:tRNA processing"/>
    <property type="evidence" value="ECO:0000315"/>
    <property type="project" value="SGD"/>
</dbReference>
<dbReference type="CDD" id="cd07895">
    <property type="entry name" value="Adenylation_mRNA_capping"/>
    <property type="match status" value="1"/>
</dbReference>
<dbReference type="FunFam" id="2.40.50.140:FF:000253">
    <property type="entry name" value="mRNA-capping enzyme subunit alpha"/>
    <property type="match status" value="1"/>
</dbReference>
<dbReference type="FunFam" id="3.30.470.30:FF:000011">
    <property type="entry name" value="mRNA-capping enzyme subunit alpha"/>
    <property type="match status" value="1"/>
</dbReference>
<dbReference type="Gene3D" id="3.30.470.30">
    <property type="entry name" value="DNA ligase/mRNA capping enzyme"/>
    <property type="match status" value="1"/>
</dbReference>
<dbReference type="Gene3D" id="2.40.50.140">
    <property type="entry name" value="Nucleic acid-binding proteins"/>
    <property type="match status" value="1"/>
</dbReference>
<dbReference type="InterPro" id="IPR001339">
    <property type="entry name" value="mRNA_cap_enzyme_adenylation"/>
</dbReference>
<dbReference type="InterPro" id="IPR017075">
    <property type="entry name" value="mRNA_cap_enzyme_alpha"/>
</dbReference>
<dbReference type="InterPro" id="IPR013846">
    <property type="entry name" value="mRNA_cap_enzyme_C"/>
</dbReference>
<dbReference type="InterPro" id="IPR051029">
    <property type="entry name" value="mRNA_Capping_Enz/RNA_Phosphat"/>
</dbReference>
<dbReference type="InterPro" id="IPR012340">
    <property type="entry name" value="NA-bd_OB-fold"/>
</dbReference>
<dbReference type="PANTHER" id="PTHR10367">
    <property type="entry name" value="MRNA-CAPPING ENZYME"/>
    <property type="match status" value="1"/>
</dbReference>
<dbReference type="PANTHER" id="PTHR10367:SF17">
    <property type="entry name" value="MRNA-CAPPING ENZYME"/>
    <property type="match status" value="1"/>
</dbReference>
<dbReference type="Pfam" id="PF03919">
    <property type="entry name" value="mRNA_cap_C"/>
    <property type="match status" value="1"/>
</dbReference>
<dbReference type="Pfam" id="PF01331">
    <property type="entry name" value="mRNA_cap_enzyme"/>
    <property type="match status" value="1"/>
</dbReference>
<dbReference type="PIRSF" id="PIRSF036959">
    <property type="entry name" value="mRNA_cap_alpha"/>
    <property type="match status" value="1"/>
</dbReference>
<dbReference type="SUPFAM" id="SSF56091">
    <property type="entry name" value="DNA ligase/mRNA capping enzyme, catalytic domain"/>
    <property type="match status" value="1"/>
</dbReference>
<dbReference type="SUPFAM" id="SSF50249">
    <property type="entry name" value="Nucleic acid-binding proteins"/>
    <property type="match status" value="1"/>
</dbReference>
<gene>
    <name type="primary">CEG1</name>
    <name type="ordered locus">YGL130W</name>
    <name type="ORF">G2853</name>
</gene>